<organism>
    <name type="scientific">Peromyscus boylii</name>
    <name type="common">Brush deermouse</name>
    <name type="synonym">Hesperomys boylii</name>
    <dbReference type="NCBI Taxonomy" id="56316"/>
    <lineage>
        <taxon>Eukaryota</taxon>
        <taxon>Metazoa</taxon>
        <taxon>Chordata</taxon>
        <taxon>Craniata</taxon>
        <taxon>Vertebrata</taxon>
        <taxon>Euteleostomi</taxon>
        <taxon>Mammalia</taxon>
        <taxon>Eutheria</taxon>
        <taxon>Euarchontoglires</taxon>
        <taxon>Glires</taxon>
        <taxon>Rodentia</taxon>
        <taxon>Myomorpha</taxon>
        <taxon>Muroidea</taxon>
        <taxon>Cricetidae</taxon>
        <taxon>Neotominae</taxon>
        <taxon>Peromyscus</taxon>
    </lineage>
</organism>
<keyword id="KW-0249">Electron transport</keyword>
<keyword id="KW-0472">Membrane</keyword>
<keyword id="KW-0496">Mitochondrion</keyword>
<keyword id="KW-0999">Mitochondrion inner membrane</keyword>
<keyword id="KW-0520">NAD</keyword>
<keyword id="KW-0679">Respiratory chain</keyword>
<keyword id="KW-1278">Translocase</keyword>
<keyword id="KW-0812">Transmembrane</keyword>
<keyword id="KW-1133">Transmembrane helix</keyword>
<keyword id="KW-0813">Transport</keyword>
<keyword id="KW-0830">Ubiquinone</keyword>
<name>NU3M_PERBO</name>
<gene>
    <name evidence="1" type="primary">MT-ND3</name>
    <name type="synonym">MTND3</name>
    <name type="synonym">NADH3</name>
    <name type="synonym">ND3</name>
</gene>
<sequence length="115" mass="13013">MNMLTALSVNIALSTCLIAIAFWLPQLNLYTEKANPYECGFDPMSSARLPFSMKFFLVAITFLLFDLEIALLLPLPWAIQTNNINTMMLTAFILVSVLALGLAYEWMQKGLEWTE</sequence>
<reference key="1">
    <citation type="journal article" date="1998" name="Mol. Biol. Evol.">
        <title>Molecular systematics and paleobiogeography of the South American sigmodontine rodents.</title>
        <authorList>
            <person name="Engel S.R."/>
            <person name="Hogan K.M."/>
            <person name="Taylor J.F."/>
            <person name="Davis S.K."/>
        </authorList>
    </citation>
    <scope>NUCLEOTIDE SEQUENCE [GENOMIC DNA]</scope>
</reference>
<evidence type="ECO:0000250" key="1">
    <source>
        <dbReference type="UniProtKB" id="P03897"/>
    </source>
</evidence>
<evidence type="ECO:0000250" key="2">
    <source>
        <dbReference type="UniProtKB" id="P03898"/>
    </source>
</evidence>
<evidence type="ECO:0000255" key="3"/>
<evidence type="ECO:0000305" key="4"/>
<accession>O21613</accession>
<proteinExistence type="inferred from homology"/>
<feature type="chain" id="PRO_0000117793" description="NADH-ubiquinone oxidoreductase chain 3">
    <location>
        <begin position="1"/>
        <end position="115"/>
    </location>
</feature>
<feature type="transmembrane region" description="Helical" evidence="3">
    <location>
        <begin position="4"/>
        <end position="24"/>
    </location>
</feature>
<feature type="transmembrane region" description="Helical" evidence="3">
    <location>
        <begin position="55"/>
        <end position="75"/>
    </location>
</feature>
<feature type="transmembrane region" description="Helical" evidence="3">
    <location>
        <begin position="87"/>
        <end position="107"/>
    </location>
</feature>
<protein>
    <recommendedName>
        <fullName evidence="1">NADH-ubiquinone oxidoreductase chain 3</fullName>
        <ecNumber evidence="1">7.1.1.2</ecNumber>
    </recommendedName>
    <alternativeName>
        <fullName>NADH dehydrogenase subunit 3</fullName>
    </alternativeName>
</protein>
<comment type="function">
    <text evidence="1">Core subunit of the mitochondrial membrane respiratory chain NADH dehydrogenase (Complex I) which catalyzes electron transfer from NADH through the respiratory chain, using ubiquinone as an electron acceptor. Essential for the catalytic activity of complex I.</text>
</comment>
<comment type="catalytic activity">
    <reaction evidence="1">
        <text>a ubiquinone + NADH + 5 H(+)(in) = a ubiquinol + NAD(+) + 4 H(+)(out)</text>
        <dbReference type="Rhea" id="RHEA:29091"/>
        <dbReference type="Rhea" id="RHEA-COMP:9565"/>
        <dbReference type="Rhea" id="RHEA-COMP:9566"/>
        <dbReference type="ChEBI" id="CHEBI:15378"/>
        <dbReference type="ChEBI" id="CHEBI:16389"/>
        <dbReference type="ChEBI" id="CHEBI:17976"/>
        <dbReference type="ChEBI" id="CHEBI:57540"/>
        <dbReference type="ChEBI" id="CHEBI:57945"/>
        <dbReference type="EC" id="7.1.1.2"/>
    </reaction>
</comment>
<comment type="subunit">
    <text evidence="1">Core subunit of respiratory chain NADH dehydrogenase (Complex I) which is composed of 45 different subunits. Interacts with TMEM186. Interacts with TMEM242 (By similarity).</text>
</comment>
<comment type="subcellular location">
    <subcellularLocation>
        <location evidence="2">Mitochondrion inner membrane</location>
        <topology evidence="3">Multi-pass membrane protein</topology>
    </subcellularLocation>
</comment>
<comment type="similarity">
    <text evidence="4">Belongs to the complex I subunit 3 family.</text>
</comment>
<dbReference type="EC" id="7.1.1.2" evidence="1"/>
<dbReference type="EMBL" id="U83864">
    <property type="protein sequence ID" value="AAB87259.1"/>
    <property type="molecule type" value="Genomic_DNA"/>
</dbReference>
<dbReference type="SMR" id="O21613"/>
<dbReference type="GO" id="GO:0005743">
    <property type="term" value="C:mitochondrial inner membrane"/>
    <property type="evidence" value="ECO:0000250"/>
    <property type="project" value="UniProtKB"/>
</dbReference>
<dbReference type="GO" id="GO:0030964">
    <property type="term" value="C:NADH dehydrogenase complex"/>
    <property type="evidence" value="ECO:0007669"/>
    <property type="project" value="TreeGrafter"/>
</dbReference>
<dbReference type="GO" id="GO:0008137">
    <property type="term" value="F:NADH dehydrogenase (ubiquinone) activity"/>
    <property type="evidence" value="ECO:0000250"/>
    <property type="project" value="UniProtKB"/>
</dbReference>
<dbReference type="GO" id="GO:0006120">
    <property type="term" value="P:mitochondrial electron transport, NADH to ubiquinone"/>
    <property type="evidence" value="ECO:0000250"/>
    <property type="project" value="UniProtKB"/>
</dbReference>
<dbReference type="FunFam" id="1.20.58.1610:FF:000004">
    <property type="entry name" value="NADH-quinone oxidoreductase subunit A"/>
    <property type="match status" value="1"/>
</dbReference>
<dbReference type="Gene3D" id="1.20.58.1610">
    <property type="entry name" value="NADH:ubiquinone/plastoquinone oxidoreductase, chain 3"/>
    <property type="match status" value="1"/>
</dbReference>
<dbReference type="InterPro" id="IPR000440">
    <property type="entry name" value="NADH_UbQ/plastoQ_OxRdtase_su3"/>
</dbReference>
<dbReference type="InterPro" id="IPR038430">
    <property type="entry name" value="NDAH_ubi_oxred_su3_sf"/>
</dbReference>
<dbReference type="PANTHER" id="PTHR11058">
    <property type="entry name" value="NADH-UBIQUINONE OXIDOREDUCTASE CHAIN 3"/>
    <property type="match status" value="1"/>
</dbReference>
<dbReference type="PANTHER" id="PTHR11058:SF9">
    <property type="entry name" value="NADH-UBIQUINONE OXIDOREDUCTASE CHAIN 3"/>
    <property type="match status" value="1"/>
</dbReference>
<dbReference type="Pfam" id="PF00507">
    <property type="entry name" value="Oxidored_q4"/>
    <property type="match status" value="1"/>
</dbReference>
<geneLocation type="mitochondrion"/>